<accession>P0C8K8</accession>
<protein>
    <recommendedName>
        <fullName>Putative E3 ubiquitin-protein ligase ARI6</fullName>
        <ecNumber evidence="2">2.3.2.31</ecNumber>
    </recommendedName>
    <alternativeName>
        <fullName>ARIADNE-like protein ARI6</fullName>
    </alternativeName>
    <alternativeName>
        <fullName>Protein ariadne homolog 6</fullName>
    </alternativeName>
    <alternativeName>
        <fullName evidence="6">RING-type E3 ubiquitin transferase ARI6</fullName>
    </alternativeName>
</protein>
<sequence length="552" mass="62834">MMDSDDDMLDAHDMDSVDYDFDSGGTDDDNDIDETDYVFGEADTDDAAIIAYHRSQINYVVLKEEDIRRHQKDDVGRVSVVLSITDVQASLLLLHYHWSVSKVNDEWFADEDRVRRTVGILEGPAPDGREFTCGICFESYPLEETISVSCGHPFCATCWTGYISTSINDGPGCLMLKCPYPCCPAAIGRDMIDNLCSKEDKERYYRYFLRSYVEVNREMKCCPAPGCEHAISFAAGTESNYDVSCLCSHSFCWNCSEEAHRPVDCDTVGKWILKNSTESENMNWILANSKPCPKCKRPIEKNHGCMHMTCTPPCKFEFCWLCLNAWTEHGESSGGYYACNRYEAAKKQGLYDEAERRREMAKNSLEKYTHYYKRWASNQVSRQKAMGDLQKMQSEKLRKLSDIQCTSESQLKFIAEAWLQIIECRRVLKWTYAYGYYVPDDHTKKQFFEYLQGEAESGLERLHECIENDIEVFEFGEGPSEEFNHFRTKLTDLTSITKTFFQNLVKALENGLADVDSHAASSKPANCKPSSNTKDGGKGKKEALTMAGSAET</sequence>
<organism>
    <name type="scientific">Arabidopsis thaliana</name>
    <name type="common">Mouse-ear cress</name>
    <dbReference type="NCBI Taxonomy" id="3702"/>
    <lineage>
        <taxon>Eukaryota</taxon>
        <taxon>Viridiplantae</taxon>
        <taxon>Streptophyta</taxon>
        <taxon>Embryophyta</taxon>
        <taxon>Tracheophyta</taxon>
        <taxon>Spermatophyta</taxon>
        <taxon>Magnoliopsida</taxon>
        <taxon>eudicotyledons</taxon>
        <taxon>Gunneridae</taxon>
        <taxon>Pentapetalae</taxon>
        <taxon>rosids</taxon>
        <taxon>malvids</taxon>
        <taxon>Brassicales</taxon>
        <taxon>Brassicaceae</taxon>
        <taxon>Camelineae</taxon>
        <taxon>Arabidopsis</taxon>
    </lineage>
</organism>
<keyword id="KW-0479">Metal-binding</keyword>
<keyword id="KW-1185">Reference proteome</keyword>
<keyword id="KW-0677">Repeat</keyword>
<keyword id="KW-0808">Transferase</keyword>
<keyword id="KW-0833">Ubl conjugation pathway</keyword>
<keyword id="KW-0862">Zinc</keyword>
<keyword id="KW-0863">Zinc-finger</keyword>
<name>ARI6_ARATH</name>
<proteinExistence type="uncertain"/>
<evidence type="ECO:0000250" key="1"/>
<evidence type="ECO:0000250" key="2">
    <source>
        <dbReference type="UniProtKB" id="Q9Y4X5"/>
    </source>
</evidence>
<evidence type="ECO:0000255" key="3">
    <source>
        <dbReference type="PROSITE-ProRule" id="PRU01221"/>
    </source>
</evidence>
<evidence type="ECO:0000256" key="4">
    <source>
        <dbReference type="SAM" id="MobiDB-lite"/>
    </source>
</evidence>
<evidence type="ECO:0000269" key="5">
    <source>
    </source>
</evidence>
<evidence type="ECO:0000305" key="6"/>
<gene>
    <name type="primary">ARI6</name>
    <name type="ordered locus">At1g63760</name>
    <name type="ORF">F24D7.5</name>
</gene>
<feature type="chain" id="PRO_0000356199" description="Putative E3 ubiquitin-protein ligase ARI6">
    <location>
        <begin position="1"/>
        <end position="552"/>
    </location>
</feature>
<feature type="zinc finger region" description="RING-type 1" evidence="3">
    <location>
        <begin position="133"/>
        <end position="183"/>
    </location>
</feature>
<feature type="zinc finger region" description="IBR-type" evidence="3">
    <location>
        <begin position="202"/>
        <end position="265"/>
    </location>
</feature>
<feature type="zinc finger region" description="RING-type 2; atypical" evidence="3">
    <location>
        <begin position="292"/>
        <end position="322"/>
    </location>
</feature>
<feature type="region of interest" description="TRIAD supradomain" evidence="3">
    <location>
        <begin position="129"/>
        <end position="343"/>
    </location>
</feature>
<feature type="region of interest" description="Disordered" evidence="4">
    <location>
        <begin position="518"/>
        <end position="552"/>
    </location>
</feature>
<feature type="compositionally biased region" description="Polar residues" evidence="4">
    <location>
        <begin position="519"/>
        <end position="534"/>
    </location>
</feature>
<feature type="active site" evidence="3">
    <location>
        <position position="305"/>
    </location>
</feature>
<feature type="binding site" evidence="3">
    <location>
        <position position="133"/>
    </location>
    <ligand>
        <name>Zn(2+)</name>
        <dbReference type="ChEBI" id="CHEBI:29105"/>
        <label>1</label>
    </ligand>
</feature>
<feature type="binding site" evidence="3">
    <location>
        <position position="136"/>
    </location>
    <ligand>
        <name>Zn(2+)</name>
        <dbReference type="ChEBI" id="CHEBI:29105"/>
        <label>1</label>
    </ligand>
</feature>
<feature type="binding site" evidence="3">
    <location>
        <position position="150"/>
    </location>
    <ligand>
        <name>Zn(2+)</name>
        <dbReference type="ChEBI" id="CHEBI:29105"/>
        <label>2</label>
    </ligand>
</feature>
<feature type="binding site" evidence="3">
    <location>
        <position position="152"/>
    </location>
    <ligand>
        <name>Zn(2+)</name>
        <dbReference type="ChEBI" id="CHEBI:29105"/>
        <label>2</label>
    </ligand>
</feature>
<feature type="binding site" evidence="3">
    <location>
        <position position="155"/>
    </location>
    <ligand>
        <name>Zn(2+)</name>
        <dbReference type="ChEBI" id="CHEBI:29105"/>
        <label>1</label>
    </ligand>
</feature>
<feature type="binding site" evidence="3">
    <location>
        <position position="158"/>
    </location>
    <ligand>
        <name>Zn(2+)</name>
        <dbReference type="ChEBI" id="CHEBI:29105"/>
        <label>1</label>
    </ligand>
</feature>
<feature type="binding site" evidence="3">
    <location>
        <position position="178"/>
    </location>
    <ligand>
        <name>Zn(2+)</name>
        <dbReference type="ChEBI" id="CHEBI:29105"/>
        <label>2</label>
    </ligand>
</feature>
<feature type="binding site" evidence="3">
    <location>
        <position position="183"/>
    </location>
    <ligand>
        <name>Zn(2+)</name>
        <dbReference type="ChEBI" id="CHEBI:29105"/>
        <label>2</label>
    </ligand>
</feature>
<feature type="binding site" evidence="3">
    <location>
        <position position="222"/>
    </location>
    <ligand>
        <name>Zn(2+)</name>
        <dbReference type="ChEBI" id="CHEBI:29105"/>
        <label>3</label>
    </ligand>
</feature>
<feature type="binding site" evidence="3">
    <location>
        <position position="227"/>
    </location>
    <ligand>
        <name>Zn(2+)</name>
        <dbReference type="ChEBI" id="CHEBI:29105"/>
        <label>3</label>
    </ligand>
</feature>
<feature type="binding site" evidence="3">
    <location>
        <position position="245"/>
    </location>
    <ligand>
        <name>Zn(2+)</name>
        <dbReference type="ChEBI" id="CHEBI:29105"/>
        <label>3</label>
    </ligand>
</feature>
<feature type="binding site" evidence="3">
    <location>
        <position position="247"/>
    </location>
    <ligand>
        <name>Zn(2+)</name>
        <dbReference type="ChEBI" id="CHEBI:29105"/>
        <label>3</label>
    </ligand>
</feature>
<feature type="binding site" evidence="3">
    <location>
        <position position="252"/>
    </location>
    <ligand>
        <name>Zn(2+)</name>
        <dbReference type="ChEBI" id="CHEBI:29105"/>
        <label>4</label>
    </ligand>
</feature>
<feature type="binding site" evidence="3">
    <location>
        <position position="255"/>
    </location>
    <ligand>
        <name>Zn(2+)</name>
        <dbReference type="ChEBI" id="CHEBI:29105"/>
        <label>4</label>
    </ligand>
</feature>
<feature type="binding site" evidence="3">
    <location>
        <position position="260"/>
    </location>
    <ligand>
        <name>Zn(2+)</name>
        <dbReference type="ChEBI" id="CHEBI:29105"/>
        <label>4</label>
    </ligand>
</feature>
<feature type="binding site" evidence="3">
    <location>
        <position position="265"/>
    </location>
    <ligand>
        <name>Zn(2+)</name>
        <dbReference type="ChEBI" id="CHEBI:29105"/>
        <label>4</label>
    </ligand>
</feature>
<feature type="binding site" evidence="3">
    <location>
        <position position="292"/>
    </location>
    <ligand>
        <name>Zn(2+)</name>
        <dbReference type="ChEBI" id="CHEBI:29105"/>
        <label>5</label>
    </ligand>
</feature>
<feature type="binding site" evidence="3">
    <location>
        <position position="295"/>
    </location>
    <ligand>
        <name>Zn(2+)</name>
        <dbReference type="ChEBI" id="CHEBI:29105"/>
        <label>5</label>
    </ligand>
</feature>
<feature type="binding site" evidence="3">
    <location>
        <position position="310"/>
    </location>
    <ligand>
        <name>Zn(2+)</name>
        <dbReference type="ChEBI" id="CHEBI:29105"/>
        <label>5</label>
    </ligand>
</feature>
<feature type="binding site" evidence="3">
    <location>
        <position position="314"/>
    </location>
    <ligand>
        <name>Zn(2+)</name>
        <dbReference type="ChEBI" id="CHEBI:29105"/>
        <label>5</label>
    </ligand>
</feature>
<feature type="binding site" evidence="3">
    <location>
        <position position="319"/>
    </location>
    <ligand>
        <name>Zn(2+)</name>
        <dbReference type="ChEBI" id="CHEBI:29105"/>
        <label>6</label>
    </ligand>
</feature>
<feature type="binding site" evidence="3">
    <location>
        <position position="322"/>
    </location>
    <ligand>
        <name>Zn(2+)</name>
        <dbReference type="ChEBI" id="CHEBI:29105"/>
        <label>6</label>
    </ligand>
</feature>
<feature type="binding site" evidence="3">
    <location>
        <position position="329"/>
    </location>
    <ligand>
        <name>Zn(2+)</name>
        <dbReference type="ChEBI" id="CHEBI:29105"/>
        <label>6</label>
    </ligand>
</feature>
<feature type="binding site" evidence="3">
    <location>
        <position position="339"/>
    </location>
    <ligand>
        <name>Zn(2+)</name>
        <dbReference type="ChEBI" id="CHEBI:29105"/>
        <label>6</label>
    </ligand>
</feature>
<dbReference type="EC" id="2.3.2.31" evidence="2"/>
<dbReference type="EMBL" id="AJ510209">
    <property type="status" value="NOT_ANNOTATED_CDS"/>
    <property type="molecule type" value="Genomic_DNA"/>
</dbReference>
<dbReference type="EMBL" id="AC011622">
    <property type="status" value="NOT_ANNOTATED_CDS"/>
    <property type="molecule type" value="Genomic_DNA"/>
</dbReference>
<dbReference type="EMBL" id="CP002684">
    <property type="status" value="NOT_ANNOTATED_CDS"/>
    <property type="molecule type" value="Genomic_DNA"/>
</dbReference>
<dbReference type="SMR" id="P0C8K8"/>
<dbReference type="FunCoup" id="P0C8K8">
    <property type="interactions" value="109"/>
</dbReference>
<dbReference type="STRING" id="3702.P0C8K8"/>
<dbReference type="Araport" id="AT1G63760"/>
<dbReference type="TAIR" id="AT1G63760"/>
<dbReference type="InParanoid" id="P0C8K8"/>
<dbReference type="UniPathway" id="UPA00143"/>
<dbReference type="Proteomes" id="UP000006548">
    <property type="component" value="Chromosome 1"/>
</dbReference>
<dbReference type="ExpressionAtlas" id="P0C8K8">
    <property type="expression patterns" value="baseline and differential"/>
</dbReference>
<dbReference type="GO" id="GO:0005737">
    <property type="term" value="C:cytoplasm"/>
    <property type="evidence" value="ECO:0000318"/>
    <property type="project" value="GO_Central"/>
</dbReference>
<dbReference type="GO" id="GO:0000151">
    <property type="term" value="C:ubiquitin ligase complex"/>
    <property type="evidence" value="ECO:0000318"/>
    <property type="project" value="GO_Central"/>
</dbReference>
<dbReference type="GO" id="GO:0031624">
    <property type="term" value="F:ubiquitin conjugating enzyme binding"/>
    <property type="evidence" value="ECO:0000318"/>
    <property type="project" value="GO_Central"/>
</dbReference>
<dbReference type="GO" id="GO:0061630">
    <property type="term" value="F:ubiquitin protein ligase activity"/>
    <property type="evidence" value="ECO:0000318"/>
    <property type="project" value="GO_Central"/>
</dbReference>
<dbReference type="GO" id="GO:0008270">
    <property type="term" value="F:zinc ion binding"/>
    <property type="evidence" value="ECO:0007669"/>
    <property type="project" value="UniProtKB-KW"/>
</dbReference>
<dbReference type="GO" id="GO:0016567">
    <property type="term" value="P:protein ubiquitination"/>
    <property type="evidence" value="ECO:0007669"/>
    <property type="project" value="UniProtKB-UniPathway"/>
</dbReference>
<dbReference type="GO" id="GO:0006511">
    <property type="term" value="P:ubiquitin-dependent protein catabolic process"/>
    <property type="evidence" value="ECO:0000318"/>
    <property type="project" value="GO_Central"/>
</dbReference>
<dbReference type="CDD" id="cd20346">
    <property type="entry name" value="BRcat_RBR_ANKIB1"/>
    <property type="match status" value="1"/>
</dbReference>
<dbReference type="CDD" id="cd22583">
    <property type="entry name" value="Rcat_RBR_ARI7-like"/>
    <property type="match status" value="1"/>
</dbReference>
<dbReference type="CDD" id="cd23141">
    <property type="entry name" value="RING-HC_ARI6-like"/>
    <property type="match status" value="1"/>
</dbReference>
<dbReference type="FunFam" id="1.20.120.1750:FF:000005">
    <property type="entry name" value="RBR-type E3 ubiquitin transferase"/>
    <property type="match status" value="1"/>
</dbReference>
<dbReference type="FunFam" id="3.30.40.10:FF:000019">
    <property type="entry name" value="RBR-type E3 ubiquitin transferase"/>
    <property type="match status" value="1"/>
</dbReference>
<dbReference type="Gene3D" id="1.20.120.1750">
    <property type="match status" value="1"/>
</dbReference>
<dbReference type="Gene3D" id="3.30.40.10">
    <property type="entry name" value="Zinc/RING finger domain, C3HC4 (zinc finger)"/>
    <property type="match status" value="1"/>
</dbReference>
<dbReference type="InterPro" id="IPR045840">
    <property type="entry name" value="Ariadne"/>
</dbReference>
<dbReference type="InterPro" id="IPR031127">
    <property type="entry name" value="E3_UB_ligase_RBR"/>
</dbReference>
<dbReference type="InterPro" id="IPR002867">
    <property type="entry name" value="IBR_dom"/>
</dbReference>
<dbReference type="InterPro" id="IPR044066">
    <property type="entry name" value="TRIAD_supradom"/>
</dbReference>
<dbReference type="InterPro" id="IPR001841">
    <property type="entry name" value="Znf_RING"/>
</dbReference>
<dbReference type="InterPro" id="IPR013083">
    <property type="entry name" value="Znf_RING/FYVE/PHD"/>
</dbReference>
<dbReference type="PANTHER" id="PTHR11685">
    <property type="entry name" value="RBR FAMILY RING FINGER AND IBR DOMAIN-CONTAINING"/>
    <property type="match status" value="1"/>
</dbReference>
<dbReference type="Pfam" id="PF19422">
    <property type="entry name" value="Ariadne"/>
    <property type="match status" value="1"/>
</dbReference>
<dbReference type="Pfam" id="PF01485">
    <property type="entry name" value="IBR"/>
    <property type="match status" value="1"/>
</dbReference>
<dbReference type="Pfam" id="PF22191">
    <property type="entry name" value="IBR_1"/>
    <property type="match status" value="1"/>
</dbReference>
<dbReference type="SMART" id="SM00647">
    <property type="entry name" value="IBR"/>
    <property type="match status" value="2"/>
</dbReference>
<dbReference type="SUPFAM" id="SSF57850">
    <property type="entry name" value="RING/U-box"/>
    <property type="match status" value="3"/>
</dbReference>
<dbReference type="PROSITE" id="PS51873">
    <property type="entry name" value="TRIAD"/>
    <property type="match status" value="1"/>
</dbReference>
<dbReference type="PROSITE" id="PS50089">
    <property type="entry name" value="ZF_RING_2"/>
    <property type="match status" value="1"/>
</dbReference>
<comment type="function">
    <text evidence="1 5">Might act as an E3 ubiquitin-protein ligase, or as part of E3 complex, which accepts ubiquitin from specific E2 ubiquitin-conjugating enzymes and then transfers it to substrates.</text>
</comment>
<comment type="catalytic activity">
    <reaction evidence="2">
        <text>[E2 ubiquitin-conjugating enzyme]-S-ubiquitinyl-L-cysteine + [acceptor protein]-L-lysine = [E2 ubiquitin-conjugating enzyme]-L-cysteine + [acceptor protein]-N(6)-ubiquitinyl-L-lysine.</text>
        <dbReference type="EC" id="2.3.2.31"/>
    </reaction>
</comment>
<comment type="cofactor">
    <cofactor evidence="6">
        <name>Zn(2+)</name>
        <dbReference type="ChEBI" id="CHEBI:29105"/>
    </cofactor>
    <text evidence="6">Binds 4 Zn(2+) ions per subunit.</text>
</comment>
<comment type="pathway">
    <text>Protein modification; protein ubiquitination.</text>
</comment>
<comment type="domain">
    <text evidence="2">Members of the RBR family are atypical E3 ligases. They interact with the E2 conjugating enzyme UBE2L3 and function like HECT-type E3 enzymes: they bind E2s via the first RING-type zinc finger, but require an obligate trans-thiolation step during the ubiquitin transfer, requiring a conserved active site Cys residue in the second RING-type zinc finger. The active site probably forms a thioester intermediate with ubiquitin taken from the active-site cysteine of the E2 before ultimately transferring it to a Lys residue on the substrate.</text>
</comment>
<comment type="similarity">
    <text evidence="6">Belongs to the RBR family. Ariadne subfamily.</text>
</comment>
<comment type="caution">
    <text evidence="6">Could be the product of a pseudogene.</text>
</comment>
<comment type="sequence caution" evidence="6">
    <conflict type="erroneous termination">
        <sequence resource="EMBL" id="AC011622"/>
    </conflict>
    <text>Truncated C-terminus.</text>
</comment>
<comment type="sequence caution" evidence="6">
    <conflict type="erroneous termination">
        <sequence resource="EMBL" id="AJ510209"/>
    </conflict>
    <text>Truncated C-terminus.</text>
</comment>
<reference key="1">
    <citation type="journal article" date="2003" name="Plant Physiol.">
        <title>Identification and characterization of the ARIADNE gene family in Arabidopsis. A group of putative E3 ligases.</title>
        <authorList>
            <person name="Mladek C."/>
            <person name="Guger K."/>
            <person name="Hauser M.-T."/>
        </authorList>
    </citation>
    <scope>NUCLEOTIDE SEQUENCE [GENOMIC DNA]</scope>
    <scope>NOMENCLATURE</scope>
    <scope>GENE FAMILY</scope>
    <source>
        <strain>cv. Columbia</strain>
    </source>
</reference>
<reference key="2">
    <citation type="journal article" date="2000" name="Nature">
        <title>Sequence and analysis of chromosome 1 of the plant Arabidopsis thaliana.</title>
        <authorList>
            <person name="Theologis A."/>
            <person name="Ecker J.R."/>
            <person name="Palm C.J."/>
            <person name="Federspiel N.A."/>
            <person name="Kaul S."/>
            <person name="White O."/>
            <person name="Alonso J."/>
            <person name="Altafi H."/>
            <person name="Araujo R."/>
            <person name="Bowman C.L."/>
            <person name="Brooks S.Y."/>
            <person name="Buehler E."/>
            <person name="Chan A."/>
            <person name="Chao Q."/>
            <person name="Chen H."/>
            <person name="Cheuk R.F."/>
            <person name="Chin C.W."/>
            <person name="Chung M.K."/>
            <person name="Conn L."/>
            <person name="Conway A.B."/>
            <person name="Conway A.R."/>
            <person name="Creasy T.H."/>
            <person name="Dewar K."/>
            <person name="Dunn P."/>
            <person name="Etgu P."/>
            <person name="Feldblyum T.V."/>
            <person name="Feng J.-D."/>
            <person name="Fong B."/>
            <person name="Fujii C.Y."/>
            <person name="Gill J.E."/>
            <person name="Goldsmith A.D."/>
            <person name="Haas B."/>
            <person name="Hansen N.F."/>
            <person name="Hughes B."/>
            <person name="Huizar L."/>
            <person name="Hunter J.L."/>
            <person name="Jenkins J."/>
            <person name="Johnson-Hopson C."/>
            <person name="Khan S."/>
            <person name="Khaykin E."/>
            <person name="Kim C.J."/>
            <person name="Koo H.L."/>
            <person name="Kremenetskaia I."/>
            <person name="Kurtz D.B."/>
            <person name="Kwan A."/>
            <person name="Lam B."/>
            <person name="Langin-Hooper S."/>
            <person name="Lee A."/>
            <person name="Lee J.M."/>
            <person name="Lenz C.A."/>
            <person name="Li J.H."/>
            <person name="Li Y.-P."/>
            <person name="Lin X."/>
            <person name="Liu S.X."/>
            <person name="Liu Z.A."/>
            <person name="Luros J.S."/>
            <person name="Maiti R."/>
            <person name="Marziali A."/>
            <person name="Militscher J."/>
            <person name="Miranda M."/>
            <person name="Nguyen M."/>
            <person name="Nierman W.C."/>
            <person name="Osborne B.I."/>
            <person name="Pai G."/>
            <person name="Peterson J."/>
            <person name="Pham P.K."/>
            <person name="Rizzo M."/>
            <person name="Rooney T."/>
            <person name="Rowley D."/>
            <person name="Sakano H."/>
            <person name="Salzberg S.L."/>
            <person name="Schwartz J.R."/>
            <person name="Shinn P."/>
            <person name="Southwick A.M."/>
            <person name="Sun H."/>
            <person name="Tallon L.J."/>
            <person name="Tambunga G."/>
            <person name="Toriumi M.J."/>
            <person name="Town C.D."/>
            <person name="Utterback T."/>
            <person name="Van Aken S."/>
            <person name="Vaysberg M."/>
            <person name="Vysotskaia V.S."/>
            <person name="Walker M."/>
            <person name="Wu D."/>
            <person name="Yu G."/>
            <person name="Fraser C.M."/>
            <person name="Venter J.C."/>
            <person name="Davis R.W."/>
        </authorList>
    </citation>
    <scope>NUCLEOTIDE SEQUENCE [LARGE SCALE GENOMIC DNA]</scope>
    <source>
        <strain>cv. Columbia</strain>
    </source>
</reference>
<reference key="3">
    <citation type="journal article" date="2017" name="Plant J.">
        <title>Araport11: a complete reannotation of the Arabidopsis thaliana reference genome.</title>
        <authorList>
            <person name="Cheng C.Y."/>
            <person name="Krishnakumar V."/>
            <person name="Chan A.P."/>
            <person name="Thibaud-Nissen F."/>
            <person name="Schobel S."/>
            <person name="Town C.D."/>
        </authorList>
    </citation>
    <scope>GENOME REANNOTATION</scope>
    <source>
        <strain>cv. Columbia</strain>
    </source>
</reference>
<reference key="4">
    <citation type="journal article" date="2002" name="Mol. Biol. Evol.">
        <title>Comparative genomics of the RBR family, including the Parkinson's disease-related gene parkin and the genes of the ariadne subfamily.</title>
        <authorList>
            <person name="Marin I."/>
            <person name="Ferrus A."/>
        </authorList>
    </citation>
    <scope>FUNCTION</scope>
</reference>